<keyword id="KW-1185">Reference proteome</keyword>
<keyword id="KW-0687">Ribonucleoprotein</keyword>
<keyword id="KW-0689">Ribosomal protein</keyword>
<protein>
    <recommendedName>
        <fullName evidence="1">Large ribosomal subunit protein uL30</fullName>
    </recommendedName>
    <alternativeName>
        <fullName evidence="2">50S ribosomal protein L30</fullName>
    </alternativeName>
</protein>
<name>RL30_LEPCP</name>
<feature type="chain" id="PRO_1000144697" description="Large ribosomal subunit protein uL30">
    <location>
        <begin position="1"/>
        <end position="60"/>
    </location>
</feature>
<sequence length="60" mass="6648">MSEKKTVRVALVRSPIGTRESHRATVRGLGLRKVNSESVLEDTPAVRGMINKISYLVKVL</sequence>
<dbReference type="EMBL" id="CP001013">
    <property type="protein sequence ID" value="ACB36185.1"/>
    <property type="molecule type" value="Genomic_DNA"/>
</dbReference>
<dbReference type="RefSeq" id="WP_012348930.1">
    <property type="nucleotide sequence ID" value="NC_010524.1"/>
</dbReference>
<dbReference type="SMR" id="B1Y8B9"/>
<dbReference type="STRING" id="395495.Lcho_3931"/>
<dbReference type="KEGG" id="lch:Lcho_3931"/>
<dbReference type="eggNOG" id="COG1841">
    <property type="taxonomic scope" value="Bacteria"/>
</dbReference>
<dbReference type="HOGENOM" id="CLU_131047_1_4_4"/>
<dbReference type="OrthoDB" id="9812790at2"/>
<dbReference type="Proteomes" id="UP000001693">
    <property type="component" value="Chromosome"/>
</dbReference>
<dbReference type="GO" id="GO:0022625">
    <property type="term" value="C:cytosolic large ribosomal subunit"/>
    <property type="evidence" value="ECO:0007669"/>
    <property type="project" value="TreeGrafter"/>
</dbReference>
<dbReference type="GO" id="GO:0003735">
    <property type="term" value="F:structural constituent of ribosome"/>
    <property type="evidence" value="ECO:0007669"/>
    <property type="project" value="InterPro"/>
</dbReference>
<dbReference type="GO" id="GO:0006412">
    <property type="term" value="P:translation"/>
    <property type="evidence" value="ECO:0007669"/>
    <property type="project" value="UniProtKB-UniRule"/>
</dbReference>
<dbReference type="CDD" id="cd01658">
    <property type="entry name" value="Ribosomal_L30"/>
    <property type="match status" value="1"/>
</dbReference>
<dbReference type="FunFam" id="3.30.1390.20:FF:000001">
    <property type="entry name" value="50S ribosomal protein L30"/>
    <property type="match status" value="1"/>
</dbReference>
<dbReference type="Gene3D" id="3.30.1390.20">
    <property type="entry name" value="Ribosomal protein L30, ferredoxin-like fold domain"/>
    <property type="match status" value="1"/>
</dbReference>
<dbReference type="HAMAP" id="MF_01371_B">
    <property type="entry name" value="Ribosomal_uL30_B"/>
    <property type="match status" value="1"/>
</dbReference>
<dbReference type="InterPro" id="IPR036919">
    <property type="entry name" value="Ribo_uL30_ferredoxin-like_sf"/>
</dbReference>
<dbReference type="InterPro" id="IPR005996">
    <property type="entry name" value="Ribosomal_uL30_bac-type"/>
</dbReference>
<dbReference type="InterPro" id="IPR016082">
    <property type="entry name" value="Ribosomal_uL30_ferredoxin-like"/>
</dbReference>
<dbReference type="NCBIfam" id="TIGR01308">
    <property type="entry name" value="rpmD_bact"/>
    <property type="match status" value="1"/>
</dbReference>
<dbReference type="PANTHER" id="PTHR15892:SF2">
    <property type="entry name" value="LARGE RIBOSOMAL SUBUNIT PROTEIN UL30M"/>
    <property type="match status" value="1"/>
</dbReference>
<dbReference type="PANTHER" id="PTHR15892">
    <property type="entry name" value="MITOCHONDRIAL RIBOSOMAL PROTEIN L30"/>
    <property type="match status" value="1"/>
</dbReference>
<dbReference type="Pfam" id="PF00327">
    <property type="entry name" value="Ribosomal_L30"/>
    <property type="match status" value="1"/>
</dbReference>
<dbReference type="PIRSF" id="PIRSF002211">
    <property type="entry name" value="Ribosomal_L30_bac-type"/>
    <property type="match status" value="1"/>
</dbReference>
<dbReference type="SUPFAM" id="SSF55129">
    <property type="entry name" value="Ribosomal protein L30p/L7e"/>
    <property type="match status" value="1"/>
</dbReference>
<gene>
    <name evidence="1" type="primary">rpmD</name>
    <name type="ordered locus">Lcho_3931</name>
</gene>
<reference key="1">
    <citation type="submission" date="2008-03" db="EMBL/GenBank/DDBJ databases">
        <title>Complete sequence of Leptothrix cholodnii SP-6.</title>
        <authorList>
            <consortium name="US DOE Joint Genome Institute"/>
            <person name="Copeland A."/>
            <person name="Lucas S."/>
            <person name="Lapidus A."/>
            <person name="Glavina del Rio T."/>
            <person name="Dalin E."/>
            <person name="Tice H."/>
            <person name="Bruce D."/>
            <person name="Goodwin L."/>
            <person name="Pitluck S."/>
            <person name="Chertkov O."/>
            <person name="Brettin T."/>
            <person name="Detter J.C."/>
            <person name="Han C."/>
            <person name="Kuske C.R."/>
            <person name="Schmutz J."/>
            <person name="Larimer F."/>
            <person name="Land M."/>
            <person name="Hauser L."/>
            <person name="Kyrpides N."/>
            <person name="Lykidis A."/>
            <person name="Emerson D."/>
            <person name="Richardson P."/>
        </authorList>
    </citation>
    <scope>NUCLEOTIDE SEQUENCE [LARGE SCALE GENOMIC DNA]</scope>
    <source>
        <strain>ATCC 51168 / LMG 8142 / SP-6</strain>
    </source>
</reference>
<proteinExistence type="inferred from homology"/>
<evidence type="ECO:0000255" key="1">
    <source>
        <dbReference type="HAMAP-Rule" id="MF_01371"/>
    </source>
</evidence>
<evidence type="ECO:0000305" key="2"/>
<accession>B1Y8B9</accession>
<comment type="subunit">
    <text evidence="1">Part of the 50S ribosomal subunit.</text>
</comment>
<comment type="similarity">
    <text evidence="1">Belongs to the universal ribosomal protein uL30 family.</text>
</comment>
<organism>
    <name type="scientific">Leptothrix cholodnii (strain ATCC 51168 / LMG 8142 / SP-6)</name>
    <name type="common">Leptothrix discophora (strain SP-6)</name>
    <dbReference type="NCBI Taxonomy" id="395495"/>
    <lineage>
        <taxon>Bacteria</taxon>
        <taxon>Pseudomonadati</taxon>
        <taxon>Pseudomonadota</taxon>
        <taxon>Betaproteobacteria</taxon>
        <taxon>Burkholderiales</taxon>
        <taxon>Sphaerotilaceae</taxon>
        <taxon>Leptothrix</taxon>
    </lineage>
</organism>